<evidence type="ECO:0000255" key="1">
    <source>
        <dbReference type="HAMAP-Rule" id="MF_02112"/>
    </source>
</evidence>
<organism>
    <name type="scientific">Nocardia farcinica (strain IFM 10152)</name>
    <dbReference type="NCBI Taxonomy" id="247156"/>
    <lineage>
        <taxon>Bacteria</taxon>
        <taxon>Bacillati</taxon>
        <taxon>Actinomycetota</taxon>
        <taxon>Actinomycetes</taxon>
        <taxon>Mycobacteriales</taxon>
        <taxon>Nocardiaceae</taxon>
        <taxon>Nocardia</taxon>
    </lineage>
</organism>
<name>ARC_NOCFA</name>
<keyword id="KW-0067">ATP-binding</keyword>
<keyword id="KW-0143">Chaperone</keyword>
<keyword id="KW-0175">Coiled coil</keyword>
<keyword id="KW-0547">Nucleotide-binding</keyword>
<keyword id="KW-0647">Proteasome</keyword>
<keyword id="KW-1185">Reference proteome</keyword>
<reference key="1">
    <citation type="journal article" date="2004" name="Proc. Natl. Acad. Sci. U.S.A.">
        <title>The complete genomic sequence of Nocardia farcinica IFM 10152.</title>
        <authorList>
            <person name="Ishikawa J."/>
            <person name="Yamashita A."/>
            <person name="Mikami Y."/>
            <person name="Hoshino Y."/>
            <person name="Kurita H."/>
            <person name="Hotta K."/>
            <person name="Shiba T."/>
            <person name="Hattori M."/>
        </authorList>
    </citation>
    <scope>NUCLEOTIDE SEQUENCE [LARGE SCALE GENOMIC DNA]</scope>
    <source>
        <strain>IFM 10152</strain>
    </source>
</reference>
<sequence length="586" mass="65133">MSPIENSDSAAWRELEAVRAEAAALRRQLADSPDRTRELEARIDSLTIRNTKLMDTLKEARQQLVALREEVDRLGQPPSGYGILIGVYDDQTVDVFTSGRKMRLTCSPNIDTSTLSYGQTVRLNEALTVVEANEYDAVGEIGTLREILDDGRRALVVGHADEERVVWLAGPLAKVAEEDDLDDPDSPVRKLRPGDSLLVDTKAGFAFERIPKAEVEDLVLEEVPDVDYSDIGGLGRQIEQIRDAVELPFLHKDLFREYELRPPKGVLLYGPPGCGKTLIAKAVANSLAKKIAEARGEDAKEAKSFFLNIKGPELLNKFVGETERHIRIIFQRAREKASEGTPVIVFFDEMDSIFRTRGSGVSSDVETTVVPQLLSEIDGVEGLENVIVIGASNREDMIDPAILRPGRLDVKIKIERPDAESAQDIFSKYLTEDLPLHADDLAEFGGDKAACVRAMIERVVDRMYAESEDNRFLEVTYANGDKEVLYFKDFNSGAMIQNIVDRAKKYAIKSVLETGSPGLRIQHLYDSIVDEFSENEDLPNTTNPDDWARISGKKGERIVYIRTLVTGKNASASRAIDTESNTGQYL</sequence>
<accession>Q5YUW4</accession>
<feature type="chain" id="PRO_0000397009" description="Proteasome-associated ATPase">
    <location>
        <begin position="1"/>
        <end position="586"/>
    </location>
</feature>
<feature type="region of interest" description="Docks into pockets in the proteasome alpha-ring" evidence="1">
    <location>
        <begin position="585"/>
        <end position="586"/>
    </location>
</feature>
<feature type="coiled-coil region" evidence="1">
    <location>
        <begin position="11"/>
        <end position="76"/>
    </location>
</feature>
<feature type="binding site" evidence="1">
    <location>
        <begin position="273"/>
        <end position="278"/>
    </location>
    <ligand>
        <name>ATP</name>
        <dbReference type="ChEBI" id="CHEBI:30616"/>
    </ligand>
</feature>
<gene>
    <name evidence="1" type="primary">arc</name>
    <name type="ordered locus">NFA_31800</name>
</gene>
<protein>
    <recommendedName>
        <fullName evidence="1">Proteasome-associated ATPase</fullName>
    </recommendedName>
    <alternativeName>
        <fullName evidence="1">AAA ATPase forming ring-shaped complexes</fullName>
        <shortName evidence="1">ARC</shortName>
    </alternativeName>
    <alternativeName>
        <fullName evidence="1">Proteasomal ATPase</fullName>
    </alternativeName>
</protein>
<proteinExistence type="inferred from homology"/>
<dbReference type="EMBL" id="AP006618">
    <property type="protein sequence ID" value="BAD58027.1"/>
    <property type="molecule type" value="Genomic_DNA"/>
</dbReference>
<dbReference type="RefSeq" id="WP_011209712.1">
    <property type="nucleotide sequence ID" value="NC_006361.1"/>
</dbReference>
<dbReference type="SMR" id="Q5YUW4"/>
<dbReference type="STRING" id="247156.NFA_31800"/>
<dbReference type="GeneID" id="61133895"/>
<dbReference type="KEGG" id="nfa:NFA_31800"/>
<dbReference type="eggNOG" id="COG1222">
    <property type="taxonomic scope" value="Bacteria"/>
</dbReference>
<dbReference type="HOGENOM" id="CLU_036054_0_0_11"/>
<dbReference type="OrthoDB" id="9809379at2"/>
<dbReference type="UniPathway" id="UPA00997"/>
<dbReference type="Proteomes" id="UP000006820">
    <property type="component" value="Chromosome"/>
</dbReference>
<dbReference type="GO" id="GO:0000502">
    <property type="term" value="C:proteasome complex"/>
    <property type="evidence" value="ECO:0007669"/>
    <property type="project" value="UniProtKB-KW"/>
</dbReference>
<dbReference type="GO" id="GO:0005524">
    <property type="term" value="F:ATP binding"/>
    <property type="evidence" value="ECO:0007669"/>
    <property type="project" value="UniProtKB-UniRule"/>
</dbReference>
<dbReference type="GO" id="GO:0016887">
    <property type="term" value="F:ATP hydrolysis activity"/>
    <property type="evidence" value="ECO:0007669"/>
    <property type="project" value="UniProtKB-UniRule"/>
</dbReference>
<dbReference type="GO" id="GO:0019941">
    <property type="term" value="P:modification-dependent protein catabolic process"/>
    <property type="evidence" value="ECO:0007669"/>
    <property type="project" value="InterPro"/>
</dbReference>
<dbReference type="GO" id="GO:0010498">
    <property type="term" value="P:proteasomal protein catabolic process"/>
    <property type="evidence" value="ECO:0007669"/>
    <property type="project" value="InterPro"/>
</dbReference>
<dbReference type="FunFam" id="1.20.5.170:FF:000018">
    <property type="entry name" value="AAA ATPase forming ring-shaped complexes"/>
    <property type="match status" value="1"/>
</dbReference>
<dbReference type="FunFam" id="2.40.50.140:FF:000169">
    <property type="entry name" value="AAA ATPase forming ring-shaped complexes"/>
    <property type="match status" value="1"/>
</dbReference>
<dbReference type="FunFam" id="3.40.50.300:FF:000155">
    <property type="entry name" value="AAA ATPase forming ring-shaped complexes"/>
    <property type="match status" value="1"/>
</dbReference>
<dbReference type="Gene3D" id="1.10.8.60">
    <property type="match status" value="1"/>
</dbReference>
<dbReference type="Gene3D" id="1.20.5.170">
    <property type="match status" value="1"/>
</dbReference>
<dbReference type="Gene3D" id="2.40.50.140">
    <property type="entry name" value="Nucleic acid-binding proteins"/>
    <property type="match status" value="2"/>
</dbReference>
<dbReference type="Gene3D" id="3.40.50.300">
    <property type="entry name" value="P-loop containing nucleotide triphosphate hydrolases"/>
    <property type="match status" value="1"/>
</dbReference>
<dbReference type="HAMAP" id="MF_02112">
    <property type="entry name" value="ARC_ATPase"/>
    <property type="match status" value="1"/>
</dbReference>
<dbReference type="InterPro" id="IPR003593">
    <property type="entry name" value="AAA+_ATPase"/>
</dbReference>
<dbReference type="InterPro" id="IPR050168">
    <property type="entry name" value="AAA_ATPase_domain"/>
</dbReference>
<dbReference type="InterPro" id="IPR003959">
    <property type="entry name" value="ATPase_AAA_core"/>
</dbReference>
<dbReference type="InterPro" id="IPR003960">
    <property type="entry name" value="ATPase_AAA_CS"/>
</dbReference>
<dbReference type="InterPro" id="IPR012340">
    <property type="entry name" value="NA-bd_OB-fold"/>
</dbReference>
<dbReference type="InterPro" id="IPR027417">
    <property type="entry name" value="P-loop_NTPase"/>
</dbReference>
<dbReference type="InterPro" id="IPR032501">
    <property type="entry name" value="Prot_ATP_ID_OB_2nd"/>
</dbReference>
<dbReference type="InterPro" id="IPR041626">
    <property type="entry name" value="Prot_ATP_ID_OB_N"/>
</dbReference>
<dbReference type="InterPro" id="IPR022482">
    <property type="entry name" value="Proteasome_ATPase"/>
</dbReference>
<dbReference type="NCBIfam" id="TIGR03689">
    <property type="entry name" value="pup_AAA"/>
    <property type="match status" value="1"/>
</dbReference>
<dbReference type="PANTHER" id="PTHR23077">
    <property type="entry name" value="AAA-FAMILY ATPASE"/>
    <property type="match status" value="1"/>
</dbReference>
<dbReference type="PANTHER" id="PTHR23077:SF144">
    <property type="entry name" value="PROTEASOME-ASSOCIATED ATPASE"/>
    <property type="match status" value="1"/>
</dbReference>
<dbReference type="Pfam" id="PF00004">
    <property type="entry name" value="AAA"/>
    <property type="match status" value="1"/>
</dbReference>
<dbReference type="Pfam" id="PF16450">
    <property type="entry name" value="Prot_ATP_ID_OB_C"/>
    <property type="match status" value="1"/>
</dbReference>
<dbReference type="Pfam" id="PF17758">
    <property type="entry name" value="Prot_ATP_ID_OB_N"/>
    <property type="match status" value="1"/>
</dbReference>
<dbReference type="SMART" id="SM00382">
    <property type="entry name" value="AAA"/>
    <property type="match status" value="1"/>
</dbReference>
<dbReference type="SUPFAM" id="SSF52540">
    <property type="entry name" value="P-loop containing nucleoside triphosphate hydrolases"/>
    <property type="match status" value="1"/>
</dbReference>
<dbReference type="PROSITE" id="PS00674">
    <property type="entry name" value="AAA"/>
    <property type="match status" value="1"/>
</dbReference>
<comment type="function">
    <text evidence="1">ATPase which is responsible for recognizing, binding, unfolding and translocation of pupylated proteins into the bacterial 20S proteasome core particle. May be essential for opening the gate of the 20S proteasome via an interaction with its C-terminus, thereby allowing substrate entry and access to the site of proteolysis. Thus, the C-termini of the proteasomal ATPase may function like a 'key in a lock' to induce gate opening and therefore regulate proteolysis.</text>
</comment>
<comment type="pathway">
    <text evidence="1">Protein degradation; proteasomal Pup-dependent pathway.</text>
</comment>
<comment type="subunit">
    <text evidence="1">Homohexamer. Assembles into a hexameric ring structure that caps the 20S proteasome core. Strongly interacts with the prokaryotic ubiquitin-like protein Pup through a hydrophobic interface; the interacting region of ARC lies in its N-terminal coiled-coil domain. There is one Pup binding site per ARC hexamer ring. Upon ATP-binding, the C-terminus of ARC interacts with the alpha-rings of the proteasome core, possibly by binding to the intersubunit pockets.</text>
</comment>
<comment type="domain">
    <text evidence="1">Consists of three main regions, an N-terminal coiled-coil domain that binds to protein Pup and functions as a docking station, an interdomain involved in ARC hexamerization, and a C-terminal ATPase domain of the AAA type.</text>
</comment>
<comment type="similarity">
    <text evidence="1">Belongs to the AAA ATPase family.</text>
</comment>